<accession>P0CN99</accession>
<accession>Q55X47</accession>
<accession>Q5KMT5</accession>
<keyword id="KW-0007">Acetylation</keyword>
<keyword id="KW-0158">Chromosome</keyword>
<keyword id="KW-0227">DNA damage</keyword>
<keyword id="KW-0234">DNA repair</keyword>
<keyword id="KW-0238">DNA-binding</keyword>
<keyword id="KW-0488">Methylation</keyword>
<keyword id="KW-0544">Nucleosome core</keyword>
<keyword id="KW-0539">Nucleus</keyword>
<keyword id="KW-0597">Phosphoprotein</keyword>
<reference key="1">
    <citation type="journal article" date="2005" name="Science">
        <title>The genome of the basidiomycetous yeast and human pathogen Cryptococcus neoformans.</title>
        <authorList>
            <person name="Loftus B.J."/>
            <person name="Fung E."/>
            <person name="Roncaglia P."/>
            <person name="Rowley D."/>
            <person name="Amedeo P."/>
            <person name="Bruno D."/>
            <person name="Vamathevan J."/>
            <person name="Miranda M."/>
            <person name="Anderson I.J."/>
            <person name="Fraser J.A."/>
            <person name="Allen J.E."/>
            <person name="Bosdet I.E."/>
            <person name="Brent M.R."/>
            <person name="Chiu R."/>
            <person name="Doering T.L."/>
            <person name="Donlin M.J."/>
            <person name="D'Souza C.A."/>
            <person name="Fox D.S."/>
            <person name="Grinberg V."/>
            <person name="Fu J."/>
            <person name="Fukushima M."/>
            <person name="Haas B.J."/>
            <person name="Huang J.C."/>
            <person name="Janbon G."/>
            <person name="Jones S.J.M."/>
            <person name="Koo H.L."/>
            <person name="Krzywinski M.I."/>
            <person name="Kwon-Chung K.J."/>
            <person name="Lengeler K.B."/>
            <person name="Maiti R."/>
            <person name="Marra M.A."/>
            <person name="Marra R.E."/>
            <person name="Mathewson C.A."/>
            <person name="Mitchell T.G."/>
            <person name="Pertea M."/>
            <person name="Riggs F.R."/>
            <person name="Salzberg S.L."/>
            <person name="Schein J.E."/>
            <person name="Shvartsbeyn A."/>
            <person name="Shin H."/>
            <person name="Shumway M."/>
            <person name="Specht C.A."/>
            <person name="Suh B.B."/>
            <person name="Tenney A."/>
            <person name="Utterback T.R."/>
            <person name="Wickes B.L."/>
            <person name="Wortman J.R."/>
            <person name="Wye N.H."/>
            <person name="Kronstad J.W."/>
            <person name="Lodge J.K."/>
            <person name="Heitman J."/>
            <person name="Davis R.W."/>
            <person name="Fraser C.M."/>
            <person name="Hyman R.W."/>
        </authorList>
    </citation>
    <scope>NUCLEOTIDE SEQUENCE [LARGE SCALE GENOMIC DNA]</scope>
    <source>
        <strain>B-3501A</strain>
    </source>
</reference>
<proteinExistence type="inferred from homology"/>
<sequence length="131" mass="13914">MSSGGKGKASSETKSSSRSSKAGLQFPVGRIHRLLKKGNYAQRIGSGAPVYLAAVLEYLAAEILELAGNAARDNKKSRIVPRHLQLAVRNDEELNKLLGSVVISQGGVLPHIMAELLPVKTKGKAKASQEV</sequence>
<feature type="initiator methionine" description="Removed" evidence="1">
    <location>
        <position position="1"/>
    </location>
</feature>
<feature type="chain" id="PRO_0000410104" description="Histone H2A">
    <location>
        <begin position="2"/>
        <end position="131"/>
    </location>
</feature>
<feature type="region of interest" description="Disordered" evidence="2">
    <location>
        <begin position="1"/>
        <end position="24"/>
    </location>
</feature>
<feature type="short sequence motif" description="[ST]-Q motif">
    <location>
        <begin position="128"/>
        <end position="129"/>
    </location>
</feature>
<feature type="compositionally biased region" description="Low complexity" evidence="2">
    <location>
        <begin position="8"/>
        <end position="23"/>
    </location>
</feature>
<feature type="modified residue" description="N6-acetyllysine" evidence="1">
    <location>
        <position position="6"/>
    </location>
</feature>
<feature type="modified residue" description="N6-acetyllysine" evidence="1">
    <location>
        <position position="8"/>
    </location>
</feature>
<feature type="modified residue" description="N5-methylglutamine" evidence="1">
    <location>
        <position position="105"/>
    </location>
</feature>
<feature type="modified residue" description="Phosphoserine" evidence="1">
    <location>
        <position position="128"/>
    </location>
</feature>
<organism>
    <name type="scientific">Cryptococcus neoformans var. neoformans serotype D (strain B-3501A)</name>
    <name type="common">Filobasidiella neoformans</name>
    <dbReference type="NCBI Taxonomy" id="283643"/>
    <lineage>
        <taxon>Eukaryota</taxon>
        <taxon>Fungi</taxon>
        <taxon>Dikarya</taxon>
        <taxon>Basidiomycota</taxon>
        <taxon>Agaricomycotina</taxon>
        <taxon>Tremellomycetes</taxon>
        <taxon>Tremellales</taxon>
        <taxon>Cryptococcaceae</taxon>
        <taxon>Cryptococcus</taxon>
        <taxon>Cryptococcus neoformans species complex</taxon>
    </lineage>
</organism>
<name>H2A_CRYNB</name>
<protein>
    <recommendedName>
        <fullName>Histone H2A</fullName>
    </recommendedName>
</protein>
<comment type="function">
    <text>Core component of nucleosome which plays a central role in DNA double strand break (DSB) repair. Nucleosomes wrap and compact DNA into chromatin, limiting DNA accessibility to the cellular machineries which require DNA as a template. Histones thereby play a central role in transcription regulation, DNA repair, DNA replication and chromosomal stability. DNA accessibility is regulated via a complex set of post-translational modifications of histones, also called histone code, and nucleosome remodeling.</text>
</comment>
<comment type="subunit">
    <text>The nucleosome is a histone octamer containing two molecules each of H2A, H2B, H3 and H4 assembled in one H3-H4 heterotetramer and two H2A-H2B heterodimers. The octamer wraps approximately 147 bp of DNA.</text>
</comment>
<comment type="subcellular location">
    <subcellularLocation>
        <location evidence="1">Nucleus</location>
    </subcellularLocation>
    <subcellularLocation>
        <location evidence="1">Chromosome</location>
    </subcellularLocation>
</comment>
<comment type="domain">
    <text>The [ST]-Q motif constitutes a recognition sequence for kinases from the PI3/PI4-kinase family.</text>
</comment>
<comment type="PTM">
    <text evidence="1">Phosphorylated to form H2AS128ph (gamma-H2A) in response to DNA double-strand breaks (DSBs) generated by exogenous genotoxic agents and by stalled replication forks. Phosphorylation is dependent on the DNA damage checkpoint kinases MEC1/ATR and TEL1/ATM, spreads on either side of a detected DSB site and may mark the surrounding chromatin for recruitment of proteins required for DNA damage signaling and repair. Gamma-H2A is removed from the DNA prior to the strand invasion-primer extension step of the repair process and subsequently dephosphorylated. Dephosphorylation is necessary for efficient recovery from the DNA damage checkpoint (By similarity).</text>
</comment>
<comment type="PTM">
    <text evidence="1">Acetylated by ESA1 to form H2AK4ac and H2AK7ac.</text>
</comment>
<comment type="miscellaneous">
    <text evidence="3">In contrast to vertebrates and insects, its C-terminus is not monoubiquitinated.</text>
</comment>
<comment type="similarity">
    <text evidence="3">Belongs to the histone H2A family.</text>
</comment>
<comment type="caution">
    <text evidence="3">To ensure consistency between histone entries, we follow the 'Brno' nomenclature for histone modifications, with positions referring to those used in the literature for the 'closest' model organism. Due to slight variations in histone sequences between organisms and to the presence of initiator methionine in UniProtKB/Swiss-Prot sequences, the actual positions of modified amino acids in the sequence generally differ. In this entry the following conventions are used: H2AK4ac = acetylated Lys-6; H2AK7ac = acetylated Lys-8; H2AS128ph = phosphorylated Ser-128.</text>
</comment>
<dbReference type="EMBL" id="AAEY01000011">
    <property type="protein sequence ID" value="EAL22340.1"/>
    <property type="molecule type" value="Genomic_DNA"/>
</dbReference>
<dbReference type="RefSeq" id="XP_776987.1">
    <property type="nucleotide sequence ID" value="XM_771894.1"/>
</dbReference>
<dbReference type="SMR" id="P0CN99"/>
<dbReference type="EnsemblFungi" id="AAW41758">
    <property type="protein sequence ID" value="AAW41758"/>
    <property type="gene ID" value="CNB00550"/>
</dbReference>
<dbReference type="GeneID" id="4934610"/>
<dbReference type="KEGG" id="cnb:CNBB5150"/>
<dbReference type="VEuPathDB" id="FungiDB:CNBB5150"/>
<dbReference type="HOGENOM" id="CLU_062828_3_1_1"/>
<dbReference type="GO" id="GO:0000786">
    <property type="term" value="C:nucleosome"/>
    <property type="evidence" value="ECO:0007669"/>
    <property type="project" value="UniProtKB-KW"/>
</dbReference>
<dbReference type="GO" id="GO:0005634">
    <property type="term" value="C:nucleus"/>
    <property type="evidence" value="ECO:0007669"/>
    <property type="project" value="UniProtKB-SubCell"/>
</dbReference>
<dbReference type="GO" id="GO:0003677">
    <property type="term" value="F:DNA binding"/>
    <property type="evidence" value="ECO:0007669"/>
    <property type="project" value="UniProtKB-KW"/>
</dbReference>
<dbReference type="GO" id="GO:0046982">
    <property type="term" value="F:protein heterodimerization activity"/>
    <property type="evidence" value="ECO:0007669"/>
    <property type="project" value="InterPro"/>
</dbReference>
<dbReference type="GO" id="GO:0030527">
    <property type="term" value="F:structural constituent of chromatin"/>
    <property type="evidence" value="ECO:0007669"/>
    <property type="project" value="InterPro"/>
</dbReference>
<dbReference type="GO" id="GO:0006281">
    <property type="term" value="P:DNA repair"/>
    <property type="evidence" value="ECO:0007669"/>
    <property type="project" value="UniProtKB-KW"/>
</dbReference>
<dbReference type="CDD" id="cd00074">
    <property type="entry name" value="HFD_H2A"/>
    <property type="match status" value="1"/>
</dbReference>
<dbReference type="FunFam" id="1.10.20.10:FF:000008">
    <property type="entry name" value="Histone H2A"/>
    <property type="match status" value="1"/>
</dbReference>
<dbReference type="Gene3D" id="1.10.20.10">
    <property type="entry name" value="Histone, subunit A"/>
    <property type="match status" value="1"/>
</dbReference>
<dbReference type="InterPro" id="IPR009072">
    <property type="entry name" value="Histone-fold"/>
</dbReference>
<dbReference type="InterPro" id="IPR002119">
    <property type="entry name" value="Histone_H2A"/>
</dbReference>
<dbReference type="InterPro" id="IPR007125">
    <property type="entry name" value="Histone_H2A/H2B/H3"/>
</dbReference>
<dbReference type="InterPro" id="IPR032454">
    <property type="entry name" value="Histone_H2A_C"/>
</dbReference>
<dbReference type="InterPro" id="IPR032458">
    <property type="entry name" value="Histone_H2A_CS"/>
</dbReference>
<dbReference type="PANTHER" id="PTHR23430">
    <property type="entry name" value="HISTONE H2A"/>
    <property type="match status" value="1"/>
</dbReference>
<dbReference type="Pfam" id="PF00125">
    <property type="entry name" value="Histone"/>
    <property type="match status" value="1"/>
</dbReference>
<dbReference type="Pfam" id="PF16211">
    <property type="entry name" value="Histone_H2A_C"/>
    <property type="match status" value="1"/>
</dbReference>
<dbReference type="PRINTS" id="PR00620">
    <property type="entry name" value="HISTONEH2A"/>
</dbReference>
<dbReference type="SMART" id="SM00414">
    <property type="entry name" value="H2A"/>
    <property type="match status" value="1"/>
</dbReference>
<dbReference type="SUPFAM" id="SSF47113">
    <property type="entry name" value="Histone-fold"/>
    <property type="match status" value="1"/>
</dbReference>
<dbReference type="PROSITE" id="PS00046">
    <property type="entry name" value="HISTONE_H2A"/>
    <property type="match status" value="1"/>
</dbReference>
<gene>
    <name type="primary">HTA1</name>
    <name type="ordered locus">CNBB5150</name>
</gene>
<evidence type="ECO:0000250" key="1"/>
<evidence type="ECO:0000256" key="2">
    <source>
        <dbReference type="SAM" id="MobiDB-lite"/>
    </source>
</evidence>
<evidence type="ECO:0000305" key="3"/>